<evidence type="ECO:0000250" key="1">
    <source>
        <dbReference type="UniProtKB" id="P02086"/>
    </source>
</evidence>
<evidence type="ECO:0000250" key="2">
    <source>
        <dbReference type="UniProtKB" id="P68871"/>
    </source>
</evidence>
<evidence type="ECO:0000255" key="3">
    <source>
        <dbReference type="PROSITE-ProRule" id="PRU00238"/>
    </source>
</evidence>
<comment type="function">
    <text>Involved in oxygen transport from the lung to the various peripheral tissues.</text>
</comment>
<comment type="subunit">
    <text>Heterotetramer of two alpha chains and two beta chains.</text>
</comment>
<comment type="tissue specificity">
    <text>Red blood cells.</text>
</comment>
<comment type="similarity">
    <text evidence="3">Belongs to the globin family.</text>
</comment>
<gene>
    <name type="primary">HBB</name>
</gene>
<protein>
    <recommendedName>
        <fullName>Hemoglobin subunit beta</fullName>
    </recommendedName>
    <alternativeName>
        <fullName>Beta-globin</fullName>
    </alternativeName>
    <alternativeName>
        <fullName>Hemoglobin beta chain</fullName>
    </alternativeName>
</protein>
<accession>P20855</accession>
<dbReference type="PIR" id="S13283">
    <property type="entry name" value="HBRTNG"/>
</dbReference>
<dbReference type="SMR" id="P20855"/>
<dbReference type="GO" id="GO:0072562">
    <property type="term" value="C:blood microparticle"/>
    <property type="evidence" value="ECO:0007669"/>
    <property type="project" value="TreeGrafter"/>
</dbReference>
<dbReference type="GO" id="GO:0031838">
    <property type="term" value="C:haptoglobin-hemoglobin complex"/>
    <property type="evidence" value="ECO:0007669"/>
    <property type="project" value="TreeGrafter"/>
</dbReference>
<dbReference type="GO" id="GO:0005833">
    <property type="term" value="C:hemoglobin complex"/>
    <property type="evidence" value="ECO:0007669"/>
    <property type="project" value="InterPro"/>
</dbReference>
<dbReference type="GO" id="GO:0031720">
    <property type="term" value="F:haptoglobin binding"/>
    <property type="evidence" value="ECO:0007669"/>
    <property type="project" value="TreeGrafter"/>
</dbReference>
<dbReference type="GO" id="GO:0020037">
    <property type="term" value="F:heme binding"/>
    <property type="evidence" value="ECO:0007669"/>
    <property type="project" value="InterPro"/>
</dbReference>
<dbReference type="GO" id="GO:0031721">
    <property type="term" value="F:hemoglobin alpha binding"/>
    <property type="evidence" value="ECO:0007669"/>
    <property type="project" value="TreeGrafter"/>
</dbReference>
<dbReference type="GO" id="GO:0046872">
    <property type="term" value="F:metal ion binding"/>
    <property type="evidence" value="ECO:0007669"/>
    <property type="project" value="UniProtKB-KW"/>
</dbReference>
<dbReference type="GO" id="GO:0043177">
    <property type="term" value="F:organic acid binding"/>
    <property type="evidence" value="ECO:0007669"/>
    <property type="project" value="TreeGrafter"/>
</dbReference>
<dbReference type="GO" id="GO:0019825">
    <property type="term" value="F:oxygen binding"/>
    <property type="evidence" value="ECO:0007669"/>
    <property type="project" value="InterPro"/>
</dbReference>
<dbReference type="GO" id="GO:0005344">
    <property type="term" value="F:oxygen carrier activity"/>
    <property type="evidence" value="ECO:0007669"/>
    <property type="project" value="UniProtKB-KW"/>
</dbReference>
<dbReference type="GO" id="GO:0004601">
    <property type="term" value="F:peroxidase activity"/>
    <property type="evidence" value="ECO:0007669"/>
    <property type="project" value="TreeGrafter"/>
</dbReference>
<dbReference type="GO" id="GO:0042744">
    <property type="term" value="P:hydrogen peroxide catabolic process"/>
    <property type="evidence" value="ECO:0007669"/>
    <property type="project" value="TreeGrafter"/>
</dbReference>
<dbReference type="CDD" id="cd08925">
    <property type="entry name" value="Hb-beta-like"/>
    <property type="match status" value="1"/>
</dbReference>
<dbReference type="FunFam" id="1.10.490.10:FF:000001">
    <property type="entry name" value="Hemoglobin subunit beta"/>
    <property type="match status" value="1"/>
</dbReference>
<dbReference type="Gene3D" id="1.10.490.10">
    <property type="entry name" value="Globins"/>
    <property type="match status" value="1"/>
</dbReference>
<dbReference type="InterPro" id="IPR000971">
    <property type="entry name" value="Globin"/>
</dbReference>
<dbReference type="InterPro" id="IPR009050">
    <property type="entry name" value="Globin-like_sf"/>
</dbReference>
<dbReference type="InterPro" id="IPR012292">
    <property type="entry name" value="Globin/Proto"/>
</dbReference>
<dbReference type="InterPro" id="IPR002337">
    <property type="entry name" value="Hemoglobin_b"/>
</dbReference>
<dbReference type="InterPro" id="IPR050056">
    <property type="entry name" value="Hemoglobin_oxygen_transport"/>
</dbReference>
<dbReference type="PANTHER" id="PTHR11442">
    <property type="entry name" value="HEMOGLOBIN FAMILY MEMBER"/>
    <property type="match status" value="1"/>
</dbReference>
<dbReference type="PANTHER" id="PTHR11442:SF42">
    <property type="entry name" value="HEMOGLOBIN SUBUNIT BETA"/>
    <property type="match status" value="1"/>
</dbReference>
<dbReference type="Pfam" id="PF00042">
    <property type="entry name" value="Globin"/>
    <property type="match status" value="1"/>
</dbReference>
<dbReference type="PRINTS" id="PR00814">
    <property type="entry name" value="BETAHAEM"/>
</dbReference>
<dbReference type="SUPFAM" id="SSF46458">
    <property type="entry name" value="Globin-like"/>
    <property type="match status" value="1"/>
</dbReference>
<dbReference type="PROSITE" id="PS01033">
    <property type="entry name" value="GLOBIN"/>
    <property type="match status" value="1"/>
</dbReference>
<feature type="chain" id="PRO_0000052938" description="Hemoglobin subunit beta">
    <location>
        <begin position="1"/>
        <end position="146"/>
    </location>
</feature>
<feature type="domain" description="Globin" evidence="3">
    <location>
        <begin position="2"/>
        <end position="146"/>
    </location>
</feature>
<feature type="binding site" description="distal binding residue">
    <location>
        <position position="63"/>
    </location>
    <ligand>
        <name>heme b</name>
        <dbReference type="ChEBI" id="CHEBI:60344"/>
    </ligand>
    <ligandPart>
        <name>Fe</name>
        <dbReference type="ChEBI" id="CHEBI:18248"/>
    </ligandPart>
</feature>
<feature type="binding site" description="proximal binding residue">
    <location>
        <position position="92"/>
    </location>
    <ligand>
        <name>heme b</name>
        <dbReference type="ChEBI" id="CHEBI:60344"/>
    </ligand>
    <ligandPart>
        <name>Fe</name>
        <dbReference type="ChEBI" id="CHEBI:18248"/>
    </ligandPart>
</feature>
<feature type="modified residue" description="N-acetylvaline" evidence="1">
    <location>
        <position position="1"/>
    </location>
</feature>
<feature type="modified residue" description="Phosphothreonine" evidence="2">
    <location>
        <position position="12"/>
    </location>
</feature>
<feature type="modified residue" description="Phosphoserine" evidence="2">
    <location>
        <position position="44"/>
    </location>
</feature>
<feature type="modified residue" description="N6-acetyllysine" evidence="2">
    <location>
        <position position="59"/>
    </location>
</feature>
<feature type="modified residue" description="N6-acetyllysine" evidence="2">
    <location>
        <position position="82"/>
    </location>
</feature>
<feature type="modified residue" description="S-nitrosocysteine" evidence="2">
    <location>
        <position position="93"/>
    </location>
</feature>
<feature type="modified residue" description="N6-acetyllysine" evidence="2">
    <location>
        <position position="144"/>
    </location>
</feature>
<sequence>VHLSAEEKAAVTGLWGKVNVEEVGGEALGRLLVVYPWTQRFFESFGDLSSAAAVMGNPKVKAHGKKVLTSFSEGLSHLDNLKGTFAKLSELHCDKLHVDPENFRLLGNMIVITLAHHYGPEFGPQTQAAFQKVVAGVANALAHKYH</sequence>
<name>HBB_CTEGU</name>
<proteinExistence type="evidence at protein level"/>
<keyword id="KW-0007">Acetylation</keyword>
<keyword id="KW-0903">Direct protein sequencing</keyword>
<keyword id="KW-0349">Heme</keyword>
<keyword id="KW-0408">Iron</keyword>
<keyword id="KW-0479">Metal-binding</keyword>
<keyword id="KW-0561">Oxygen transport</keyword>
<keyword id="KW-0597">Phosphoprotein</keyword>
<keyword id="KW-0702">S-nitrosylation</keyword>
<keyword id="KW-0813">Transport</keyword>
<organism>
    <name type="scientific">Ctenodactylus gundi</name>
    <name type="common">Northern gundi</name>
    <dbReference type="NCBI Taxonomy" id="10166"/>
    <lineage>
        <taxon>Eukaryota</taxon>
        <taxon>Metazoa</taxon>
        <taxon>Chordata</taxon>
        <taxon>Craniata</taxon>
        <taxon>Vertebrata</taxon>
        <taxon>Euteleostomi</taxon>
        <taxon>Mammalia</taxon>
        <taxon>Eutheria</taxon>
        <taxon>Euarchontoglires</taxon>
        <taxon>Glires</taxon>
        <taxon>Rodentia</taxon>
        <taxon>Hystricomorpha</taxon>
        <taxon>Ctenodactylidae</taxon>
        <taxon>Ctenodactylus</taxon>
    </lineage>
</organism>
<reference key="1">
    <citation type="journal article" date="1990" name="Biol. Chem. Hoppe-Seyler">
        <title>The primary structures of gundi (Ctenodactylus gundi, Rodentia) hemoglobin and myoglobin.</title>
        <authorList>
            <person name="Beintema J.J."/>
            <person name="Rodewald K."/>
            <person name="Braunitzer G."/>
        </authorList>
    </citation>
    <scope>PROTEIN SEQUENCE</scope>
</reference>